<evidence type="ECO:0000250" key="1"/>
<evidence type="ECO:0000255" key="2"/>
<evidence type="ECO:0000256" key="3">
    <source>
        <dbReference type="SAM" id="MobiDB-lite"/>
    </source>
</evidence>
<evidence type="ECO:0000305" key="4"/>
<accession>Q6Z2U5</accession>
<accession>A0A0N7KG31</accession>
<proteinExistence type="inferred from homology"/>
<protein>
    <recommendedName>
        <fullName>Casparian strip membrane protein 4</fullName>
        <shortName>OsCASP4</shortName>
    </recommendedName>
</protein>
<comment type="function">
    <text evidence="1">Regulates membrane-cell wall junctions and localized cell wall deposition. Required for establishment of the Casparian strip membrane domain (CSD) and the subsequent formation of Casparian strips, a cell wall modification of the root endodermis that determines an apoplastic barrier between the intraorganismal apoplasm and the extraorganismal apoplasm and prevents lateral diffusion (By similarity).</text>
</comment>
<comment type="subunit">
    <text evidence="1">Homodimer and heterodimers.</text>
</comment>
<comment type="subcellular location">
    <subcellularLocation>
        <location evidence="1">Cell membrane</location>
        <topology evidence="1">Multi-pass membrane protein</topology>
    </subcellularLocation>
    <text evidence="1">Very restricted localization following a belt shape within the plasma membrane which coincides with the position of the Casparian strip membrane domain in the root endodermis.</text>
</comment>
<comment type="similarity">
    <text evidence="4">Belongs to the Casparian strip membrane proteins (CASP) family.</text>
</comment>
<comment type="sequence caution" evidence="4">
    <conflict type="erroneous gene model prediction">
        <sequence resource="EMBL-CDS" id="BAD16116"/>
    </conflict>
</comment>
<name>CASP4_ORYSJ</name>
<reference key="1">
    <citation type="journal article" date="2005" name="Nature">
        <title>The map-based sequence of the rice genome.</title>
        <authorList>
            <consortium name="International rice genome sequencing project (IRGSP)"/>
        </authorList>
    </citation>
    <scope>NUCLEOTIDE SEQUENCE [LARGE SCALE GENOMIC DNA]</scope>
    <source>
        <strain>cv. Nipponbare</strain>
    </source>
</reference>
<reference key="2">
    <citation type="journal article" date="2013" name="Rice">
        <title>Improvement of the Oryza sativa Nipponbare reference genome using next generation sequence and optical map data.</title>
        <authorList>
            <person name="Kawahara Y."/>
            <person name="de la Bastide M."/>
            <person name="Hamilton J.P."/>
            <person name="Kanamori H."/>
            <person name="McCombie W.R."/>
            <person name="Ouyang S."/>
            <person name="Schwartz D.C."/>
            <person name="Tanaka T."/>
            <person name="Wu J."/>
            <person name="Zhou S."/>
            <person name="Childs K.L."/>
            <person name="Davidson R.M."/>
            <person name="Lin H."/>
            <person name="Quesada-Ocampo L."/>
            <person name="Vaillancourt B."/>
            <person name="Sakai H."/>
            <person name="Lee S.S."/>
            <person name="Kim J."/>
            <person name="Numa H."/>
            <person name="Itoh T."/>
            <person name="Buell C.R."/>
            <person name="Matsumoto T."/>
        </authorList>
    </citation>
    <scope>GENOME REANNOTATION</scope>
    <source>
        <strain>cv. Nipponbare</strain>
    </source>
</reference>
<reference key="3">
    <citation type="journal article" date="2014" name="Plant Physiol.">
        <title>Functional and evolutionary analysis of the CASPARIAN STRIP MEMBRANE DOMAIN PROTEIN family.</title>
        <authorList>
            <person name="Roppolo D."/>
            <person name="Boeckmann B."/>
            <person name="Pfister A."/>
            <person name="Boutet E."/>
            <person name="Rubio M.C."/>
            <person name="Denervaud-Tendon V."/>
            <person name="Vermeer J.E."/>
            <person name="Gheyselinck J."/>
            <person name="Xenarios I."/>
            <person name="Geldner N."/>
        </authorList>
    </citation>
    <scope>GENE FAMILY</scope>
    <scope>NOMENCLATURE</scope>
</reference>
<feature type="chain" id="PRO_0000370292" description="Casparian strip membrane protein 4">
    <location>
        <begin position="1"/>
        <end position="201"/>
    </location>
</feature>
<feature type="topological domain" description="Cytoplasmic" evidence="2">
    <location>
        <begin position="1"/>
        <end position="41"/>
    </location>
</feature>
<feature type="transmembrane region" description="Helical" evidence="2">
    <location>
        <begin position="42"/>
        <end position="62"/>
    </location>
</feature>
<feature type="topological domain" description="Extracellular" evidence="2">
    <location>
        <begin position="63"/>
        <end position="87"/>
    </location>
</feature>
<feature type="transmembrane region" description="Helical" evidence="2">
    <location>
        <begin position="88"/>
        <end position="108"/>
    </location>
</feature>
<feature type="topological domain" description="Cytoplasmic" evidence="2">
    <location>
        <begin position="109"/>
        <end position="122"/>
    </location>
</feature>
<feature type="transmembrane region" description="Helical" evidence="2">
    <location>
        <begin position="123"/>
        <end position="143"/>
    </location>
</feature>
<feature type="topological domain" description="Extracellular" evidence="2">
    <location>
        <begin position="144"/>
        <end position="172"/>
    </location>
</feature>
<feature type="transmembrane region" description="Helical" evidence="2">
    <location>
        <begin position="173"/>
        <end position="193"/>
    </location>
</feature>
<feature type="topological domain" description="Cytoplasmic" evidence="2">
    <location>
        <begin position="194"/>
        <end position="201"/>
    </location>
</feature>
<feature type="region of interest" description="Disordered" evidence="3">
    <location>
        <begin position="1"/>
        <end position="23"/>
    </location>
</feature>
<feature type="glycosylation site" description="N-linked (GlcNAc...) asparagine" evidence="2">
    <location>
        <position position="66"/>
    </location>
</feature>
<gene>
    <name type="ordered locus">Os02g0743900</name>
    <name type="ordered locus">LOC_Os02g51010</name>
    <name type="ORF">OJ1734_E02.23</name>
</gene>
<keyword id="KW-1003">Cell membrane</keyword>
<keyword id="KW-0961">Cell wall biogenesis/degradation</keyword>
<keyword id="KW-0325">Glycoprotein</keyword>
<keyword id="KW-0472">Membrane</keyword>
<keyword id="KW-1185">Reference proteome</keyword>
<keyword id="KW-0812">Transmembrane</keyword>
<keyword id="KW-1133">Transmembrane helix</keyword>
<dbReference type="EMBL" id="AP005297">
    <property type="protein sequence ID" value="BAD16116.1"/>
    <property type="status" value="ALT_SEQ"/>
    <property type="molecule type" value="Genomic_DNA"/>
</dbReference>
<dbReference type="EMBL" id="AP014958">
    <property type="protein sequence ID" value="BAS80881.1"/>
    <property type="molecule type" value="Genomic_DNA"/>
</dbReference>
<dbReference type="SMR" id="Q6Z2U5"/>
<dbReference type="STRING" id="39947.Q6Z2U5"/>
<dbReference type="PaxDb" id="39947-Q6Z2U5"/>
<dbReference type="EnsemblPlants" id="Os02t0743900-00">
    <property type="protein sequence ID" value="Os02t0743900-00"/>
    <property type="gene ID" value="Os02g0743900"/>
</dbReference>
<dbReference type="GeneID" id="107275435"/>
<dbReference type="Gramene" id="Os02t0743900-00">
    <property type="protein sequence ID" value="Os02t0743900-00"/>
    <property type="gene ID" value="Os02g0743900"/>
</dbReference>
<dbReference type="KEGG" id="osa:107275435"/>
<dbReference type="eggNOG" id="ENOG502RXTK">
    <property type="taxonomic scope" value="Eukaryota"/>
</dbReference>
<dbReference type="HOGENOM" id="CLU_066104_3_2_1"/>
<dbReference type="InParanoid" id="Q6Z2U5"/>
<dbReference type="OMA" id="ANWFAVC"/>
<dbReference type="OrthoDB" id="753675at2759"/>
<dbReference type="Proteomes" id="UP000000763">
    <property type="component" value="Chromosome 2"/>
</dbReference>
<dbReference type="Proteomes" id="UP000059680">
    <property type="component" value="Chromosome 2"/>
</dbReference>
<dbReference type="GO" id="GO:0005886">
    <property type="term" value="C:plasma membrane"/>
    <property type="evidence" value="ECO:0000318"/>
    <property type="project" value="GO_Central"/>
</dbReference>
<dbReference type="GO" id="GO:0071555">
    <property type="term" value="P:cell wall organization"/>
    <property type="evidence" value="ECO:0007669"/>
    <property type="project" value="UniProtKB-KW"/>
</dbReference>
<dbReference type="InterPro" id="IPR006459">
    <property type="entry name" value="CASP/CASPL"/>
</dbReference>
<dbReference type="InterPro" id="IPR006702">
    <property type="entry name" value="CASP_dom"/>
</dbReference>
<dbReference type="InterPro" id="IPR044173">
    <property type="entry name" value="CASPL"/>
</dbReference>
<dbReference type="NCBIfam" id="TIGR01569">
    <property type="entry name" value="A_tha_TIGR01569"/>
    <property type="match status" value="1"/>
</dbReference>
<dbReference type="PANTHER" id="PTHR36488:SF12">
    <property type="entry name" value="CASP-LIKE PROTEIN"/>
    <property type="match status" value="1"/>
</dbReference>
<dbReference type="PANTHER" id="PTHR36488">
    <property type="entry name" value="CASP-LIKE PROTEIN 1U1"/>
    <property type="match status" value="1"/>
</dbReference>
<dbReference type="Pfam" id="PF04535">
    <property type="entry name" value="CASP_dom"/>
    <property type="match status" value="1"/>
</dbReference>
<organism>
    <name type="scientific">Oryza sativa subsp. japonica</name>
    <name type="common">Rice</name>
    <dbReference type="NCBI Taxonomy" id="39947"/>
    <lineage>
        <taxon>Eukaryota</taxon>
        <taxon>Viridiplantae</taxon>
        <taxon>Streptophyta</taxon>
        <taxon>Embryophyta</taxon>
        <taxon>Tracheophyta</taxon>
        <taxon>Spermatophyta</taxon>
        <taxon>Magnoliopsida</taxon>
        <taxon>Liliopsida</taxon>
        <taxon>Poales</taxon>
        <taxon>Poaceae</taxon>
        <taxon>BOP clade</taxon>
        <taxon>Oryzoideae</taxon>
        <taxon>Oryzeae</taxon>
        <taxon>Oryzinae</taxon>
        <taxon>Oryza</taxon>
        <taxon>Oryza sativa</taxon>
    </lineage>
</organism>
<sequence length="201" mass="21106">MEGKAAVTTSTEHGDGEASRTAARTVVSGSSRGGAASRALSVADLILRVVAVVAIVDSAIAMGTTNQTLPFFTQFLRFKAQYSDLPTLTLFVVANSAVTAYLVLSIPLSVVHIIRSRASYSRLVLIFLDSVMLALVAAVASASAAIVYLAHKGNVRANWFAVCQQFDSFCERISGPLIGSFAAMAVLLLLVLLSAAALARR</sequence>